<organism>
    <name type="scientific">Aspergillus fumigatus (strain ATCC MYA-4609 / CBS 101355 / FGSC A1100 / Af293)</name>
    <name type="common">Neosartorya fumigata</name>
    <dbReference type="NCBI Taxonomy" id="330879"/>
    <lineage>
        <taxon>Eukaryota</taxon>
        <taxon>Fungi</taxon>
        <taxon>Dikarya</taxon>
        <taxon>Ascomycota</taxon>
        <taxon>Pezizomycotina</taxon>
        <taxon>Eurotiomycetes</taxon>
        <taxon>Eurotiomycetidae</taxon>
        <taxon>Eurotiales</taxon>
        <taxon>Aspergillaceae</taxon>
        <taxon>Aspergillus</taxon>
        <taxon>Aspergillus subgen. Fumigati</taxon>
    </lineage>
</organism>
<feature type="chain" id="PRO_0000407638" description="Methionine aminopeptidase 2-2">
    <location>
        <begin position="1"/>
        <end position="486"/>
    </location>
</feature>
<feature type="region of interest" description="Disordered" evidence="2">
    <location>
        <begin position="1"/>
        <end position="120"/>
    </location>
</feature>
<feature type="compositionally biased region" description="Basic and acidic residues" evidence="2">
    <location>
        <begin position="1"/>
        <end position="10"/>
    </location>
</feature>
<feature type="compositionally biased region" description="Acidic residues" evidence="2">
    <location>
        <begin position="46"/>
        <end position="56"/>
    </location>
</feature>
<feature type="compositionally biased region" description="Basic residues" evidence="2">
    <location>
        <begin position="93"/>
        <end position="108"/>
    </location>
</feature>
<feature type="binding site" evidence="1">
    <location>
        <position position="238"/>
    </location>
    <ligand>
        <name>substrate</name>
    </ligand>
</feature>
<feature type="binding site" evidence="1">
    <location>
        <position position="259"/>
    </location>
    <ligand>
        <name>a divalent metal cation</name>
        <dbReference type="ChEBI" id="CHEBI:60240"/>
        <label>1</label>
    </ligand>
</feature>
<feature type="binding site" evidence="1">
    <location>
        <position position="270"/>
    </location>
    <ligand>
        <name>a divalent metal cation</name>
        <dbReference type="ChEBI" id="CHEBI:60240"/>
        <label>1</label>
    </ligand>
</feature>
<feature type="binding site" evidence="1">
    <location>
        <position position="270"/>
    </location>
    <ligand>
        <name>a divalent metal cation</name>
        <dbReference type="ChEBI" id="CHEBI:60240"/>
        <label>2</label>
        <note>catalytic</note>
    </ligand>
</feature>
<feature type="binding site" evidence="1">
    <location>
        <position position="339"/>
    </location>
    <ligand>
        <name>a divalent metal cation</name>
        <dbReference type="ChEBI" id="CHEBI:60240"/>
        <label>2</label>
        <note>catalytic</note>
    </ligand>
</feature>
<feature type="binding site" evidence="1">
    <location>
        <position position="347"/>
    </location>
    <ligand>
        <name>substrate</name>
    </ligand>
</feature>
<feature type="binding site" evidence="1">
    <location>
        <position position="372"/>
    </location>
    <ligand>
        <name>a divalent metal cation</name>
        <dbReference type="ChEBI" id="CHEBI:60240"/>
        <label>2</label>
        <note>catalytic</note>
    </ligand>
</feature>
<feature type="binding site" evidence="1">
    <location>
        <position position="467"/>
    </location>
    <ligand>
        <name>a divalent metal cation</name>
        <dbReference type="ChEBI" id="CHEBI:60240"/>
        <label>1</label>
    </ligand>
</feature>
<feature type="binding site" evidence="1">
    <location>
        <position position="467"/>
    </location>
    <ligand>
        <name>a divalent metal cation</name>
        <dbReference type="ChEBI" id="CHEBI:60240"/>
        <label>2</label>
        <note>catalytic</note>
    </ligand>
</feature>
<keyword id="KW-0031">Aminopeptidase</keyword>
<keyword id="KW-0963">Cytoplasm</keyword>
<keyword id="KW-0378">Hydrolase</keyword>
<keyword id="KW-0479">Metal-binding</keyword>
<keyword id="KW-0645">Protease</keyword>
<keyword id="KW-1185">Reference proteome</keyword>
<name>MAP22_ASPFU</name>
<gene>
    <name type="ORF">AFUA_2G01750</name>
</gene>
<proteinExistence type="inferred from homology"/>
<protein>
    <recommendedName>
        <fullName evidence="1">Methionine aminopeptidase 2-2</fullName>
        <shortName evidence="1">MAP 2-2</shortName>
        <shortName evidence="1">MetAP 2-2</shortName>
        <ecNumber evidence="1">3.4.11.18</ecNumber>
    </recommendedName>
    <alternativeName>
        <fullName evidence="1">Peptidase M</fullName>
    </alternativeName>
</protein>
<dbReference type="EC" id="3.4.11.18" evidence="1"/>
<dbReference type="EMBL" id="AAHF01000008">
    <property type="protein sequence ID" value="EAL87272.1"/>
    <property type="molecule type" value="Genomic_DNA"/>
</dbReference>
<dbReference type="RefSeq" id="XP_749310.1">
    <property type="nucleotide sequence ID" value="XM_744217.1"/>
</dbReference>
<dbReference type="SMR" id="Q4WII3"/>
<dbReference type="FunCoup" id="Q4WII3">
    <property type="interactions" value="1172"/>
</dbReference>
<dbReference type="STRING" id="330879.Q4WII3"/>
<dbReference type="MEROPS" id="M24.A02"/>
<dbReference type="EnsemblFungi" id="EAL87272">
    <property type="protein sequence ID" value="EAL87272"/>
    <property type="gene ID" value="AFUA_2G01750"/>
</dbReference>
<dbReference type="GeneID" id="3506721"/>
<dbReference type="KEGG" id="afm:AFUA_2G01750"/>
<dbReference type="eggNOG" id="KOG2775">
    <property type="taxonomic scope" value="Eukaryota"/>
</dbReference>
<dbReference type="HOGENOM" id="CLU_015857_7_1_1"/>
<dbReference type="InParanoid" id="Q4WII3"/>
<dbReference type="OMA" id="ILRYHIH"/>
<dbReference type="OrthoDB" id="7848262at2759"/>
<dbReference type="Proteomes" id="UP000002530">
    <property type="component" value="Chromosome 2"/>
</dbReference>
<dbReference type="GO" id="GO:0005737">
    <property type="term" value="C:cytoplasm"/>
    <property type="evidence" value="ECO:0000318"/>
    <property type="project" value="GO_Central"/>
</dbReference>
<dbReference type="GO" id="GO:0004177">
    <property type="term" value="F:aminopeptidase activity"/>
    <property type="evidence" value="ECO:0000318"/>
    <property type="project" value="GO_Central"/>
</dbReference>
<dbReference type="GO" id="GO:0004239">
    <property type="term" value="F:initiator methionyl aminopeptidase activity"/>
    <property type="evidence" value="ECO:0007669"/>
    <property type="project" value="UniProtKB-UniRule"/>
</dbReference>
<dbReference type="GO" id="GO:0046872">
    <property type="term" value="F:metal ion binding"/>
    <property type="evidence" value="ECO:0007669"/>
    <property type="project" value="UniProtKB-UniRule"/>
</dbReference>
<dbReference type="GO" id="GO:0070006">
    <property type="term" value="F:metalloaminopeptidase activity"/>
    <property type="evidence" value="ECO:0007669"/>
    <property type="project" value="UniProtKB-UniRule"/>
</dbReference>
<dbReference type="GO" id="GO:0008235">
    <property type="term" value="F:metalloexopeptidase activity"/>
    <property type="evidence" value="ECO:0000318"/>
    <property type="project" value="GO_Central"/>
</dbReference>
<dbReference type="GO" id="GO:0006508">
    <property type="term" value="P:proteolysis"/>
    <property type="evidence" value="ECO:0007669"/>
    <property type="project" value="UniProtKB-KW"/>
</dbReference>
<dbReference type="CDD" id="cd01088">
    <property type="entry name" value="MetAP2"/>
    <property type="match status" value="1"/>
</dbReference>
<dbReference type="Gene3D" id="3.90.230.10">
    <property type="entry name" value="Creatinase/methionine aminopeptidase superfamily"/>
    <property type="match status" value="1"/>
</dbReference>
<dbReference type="Gene3D" id="1.10.10.10">
    <property type="entry name" value="Winged helix-like DNA-binding domain superfamily/Winged helix DNA-binding domain"/>
    <property type="match status" value="1"/>
</dbReference>
<dbReference type="HAMAP" id="MF_03175">
    <property type="entry name" value="MetAP_2_euk"/>
    <property type="match status" value="1"/>
</dbReference>
<dbReference type="InterPro" id="IPR036005">
    <property type="entry name" value="Creatinase/aminopeptidase-like"/>
</dbReference>
<dbReference type="InterPro" id="IPR050247">
    <property type="entry name" value="Met_Aminopeptidase_Type2"/>
</dbReference>
<dbReference type="InterPro" id="IPR000994">
    <property type="entry name" value="Pept_M24"/>
</dbReference>
<dbReference type="InterPro" id="IPR001714">
    <property type="entry name" value="Pept_M24_MAP"/>
</dbReference>
<dbReference type="InterPro" id="IPR002468">
    <property type="entry name" value="Pept_M24A_MAP2"/>
</dbReference>
<dbReference type="InterPro" id="IPR018349">
    <property type="entry name" value="Pept_M24A_MAP2_BS"/>
</dbReference>
<dbReference type="InterPro" id="IPR036388">
    <property type="entry name" value="WH-like_DNA-bd_sf"/>
</dbReference>
<dbReference type="InterPro" id="IPR036390">
    <property type="entry name" value="WH_DNA-bd_sf"/>
</dbReference>
<dbReference type="NCBIfam" id="TIGR00501">
    <property type="entry name" value="met_pdase_II"/>
    <property type="match status" value="1"/>
</dbReference>
<dbReference type="PANTHER" id="PTHR45777">
    <property type="entry name" value="METHIONINE AMINOPEPTIDASE 2"/>
    <property type="match status" value="1"/>
</dbReference>
<dbReference type="PANTHER" id="PTHR45777:SF1">
    <property type="entry name" value="METHIONINE AMINOPEPTIDASE 2-2"/>
    <property type="match status" value="1"/>
</dbReference>
<dbReference type="Pfam" id="PF00557">
    <property type="entry name" value="Peptidase_M24"/>
    <property type="match status" value="1"/>
</dbReference>
<dbReference type="PRINTS" id="PR00599">
    <property type="entry name" value="MAPEPTIDASE"/>
</dbReference>
<dbReference type="SUPFAM" id="SSF55920">
    <property type="entry name" value="Creatinase/aminopeptidase"/>
    <property type="match status" value="1"/>
</dbReference>
<dbReference type="SUPFAM" id="SSF46785">
    <property type="entry name" value="Winged helix' DNA-binding domain"/>
    <property type="match status" value="1"/>
</dbReference>
<dbReference type="PROSITE" id="PS01202">
    <property type="entry name" value="MAP_2"/>
    <property type="match status" value="1"/>
</dbReference>
<evidence type="ECO:0000255" key="1">
    <source>
        <dbReference type="HAMAP-Rule" id="MF_03175"/>
    </source>
</evidence>
<evidence type="ECO:0000256" key="2">
    <source>
        <dbReference type="SAM" id="MobiDB-lite"/>
    </source>
</evidence>
<accession>Q4WII3</accession>
<comment type="function">
    <text evidence="1">Cotranslationally removes the N-terminal methionine from nascent proteins. The N-terminal methionine is often cleaved when the second residue in the primary sequence is small and uncharged (Met-Ala-, Cys, Gly, Pro, Ser, Thr, or Val).</text>
</comment>
<comment type="catalytic activity">
    <reaction evidence="1">
        <text>Release of N-terminal amino acids, preferentially methionine, from peptides and arylamides.</text>
        <dbReference type="EC" id="3.4.11.18"/>
    </reaction>
</comment>
<comment type="cofactor">
    <cofactor evidence="1">
        <name>Co(2+)</name>
        <dbReference type="ChEBI" id="CHEBI:48828"/>
    </cofactor>
    <cofactor evidence="1">
        <name>Zn(2+)</name>
        <dbReference type="ChEBI" id="CHEBI:29105"/>
    </cofactor>
    <cofactor evidence="1">
        <name>Mn(2+)</name>
        <dbReference type="ChEBI" id="CHEBI:29035"/>
    </cofactor>
    <cofactor evidence="1">
        <name>Fe(2+)</name>
        <dbReference type="ChEBI" id="CHEBI:29033"/>
    </cofactor>
    <text evidence="1">Binds 2 divalent metal cations per subunit. Has a high-affinity and a low affinity metal-binding site. The true nature of the physiological cofactor is under debate. The enzyme is active with cobalt, zinc, manganese or divalent iron ions. Most likely, methionine aminopeptidases function as mononuclear Fe(2+)-metalloproteases under physiological conditions, and the catalytically relevant metal-binding site has been assigned to the histidine-containing high-affinity site.</text>
</comment>
<comment type="subcellular location">
    <subcellularLocation>
        <location evidence="1">Cytoplasm</location>
    </subcellularLocation>
</comment>
<comment type="similarity">
    <text evidence="1">Belongs to the peptidase M24A family. Methionine aminopeptidase eukaryotic type 2 subfamily.</text>
</comment>
<sequence length="486" mass="53508">MGSKSPEGHRQAPHASNCNELKPANPDPQISQNGSGSADLDRGVIGDDDDDEDAEENGVNTETPNVGKLNQPPFPNLDQVHVTTTDGLCITEKKKKRKKSNKKKKKTKSGALPATELKQTSPPRVLVSTLFPSEYPVGELVPYDCTARTTDEELRYNSRLWDDDFLPDYRQAAEIHRQVRQYAQKELIKPGATLLSIAEGIEDGVRALSGHQGLEPGDFFKAGMGFPTGLCLNHIAAHWTPNPREKDVILDKGDVLKVDFGVHVNGRIVDSAFTVAFDDKYDNLLTAVREATNTGIKHAGVDARMSDIGAAIQEVMESYEVEIDGKVFPVKAIRNITGHDILRYHIHGGKQIPFIKNNNQDKMEEGEVYAIETFGSTGRGFLDDDVGVYGYGRNENMSGANLRLSSAKSLLKTIDASFGSIVFSRRYLERLGVKNYLLGMKNLIDNGIVECYSPLVDVKGSYTAQFEHTILLHSGGKEVISRGDDY</sequence>
<reference key="1">
    <citation type="journal article" date="2005" name="Nature">
        <title>Genomic sequence of the pathogenic and allergenic filamentous fungus Aspergillus fumigatus.</title>
        <authorList>
            <person name="Nierman W.C."/>
            <person name="Pain A."/>
            <person name="Anderson M.J."/>
            <person name="Wortman J.R."/>
            <person name="Kim H.S."/>
            <person name="Arroyo J."/>
            <person name="Berriman M."/>
            <person name="Abe K."/>
            <person name="Archer D.B."/>
            <person name="Bermejo C."/>
            <person name="Bennett J.W."/>
            <person name="Bowyer P."/>
            <person name="Chen D."/>
            <person name="Collins M."/>
            <person name="Coulsen R."/>
            <person name="Davies R."/>
            <person name="Dyer P.S."/>
            <person name="Farman M.L."/>
            <person name="Fedorova N."/>
            <person name="Fedorova N.D."/>
            <person name="Feldblyum T.V."/>
            <person name="Fischer R."/>
            <person name="Fosker N."/>
            <person name="Fraser A."/>
            <person name="Garcia J.L."/>
            <person name="Garcia M.J."/>
            <person name="Goble A."/>
            <person name="Goldman G.H."/>
            <person name="Gomi K."/>
            <person name="Griffith-Jones S."/>
            <person name="Gwilliam R."/>
            <person name="Haas B.J."/>
            <person name="Haas H."/>
            <person name="Harris D.E."/>
            <person name="Horiuchi H."/>
            <person name="Huang J."/>
            <person name="Humphray S."/>
            <person name="Jimenez J."/>
            <person name="Keller N."/>
            <person name="Khouri H."/>
            <person name="Kitamoto K."/>
            <person name="Kobayashi T."/>
            <person name="Konzack S."/>
            <person name="Kulkarni R."/>
            <person name="Kumagai T."/>
            <person name="Lafton A."/>
            <person name="Latge J.-P."/>
            <person name="Li W."/>
            <person name="Lord A."/>
            <person name="Lu C."/>
            <person name="Majoros W.H."/>
            <person name="May G.S."/>
            <person name="Miller B.L."/>
            <person name="Mohamoud Y."/>
            <person name="Molina M."/>
            <person name="Monod M."/>
            <person name="Mouyna I."/>
            <person name="Mulligan S."/>
            <person name="Murphy L.D."/>
            <person name="O'Neil S."/>
            <person name="Paulsen I."/>
            <person name="Penalva M.A."/>
            <person name="Pertea M."/>
            <person name="Price C."/>
            <person name="Pritchard B.L."/>
            <person name="Quail M.A."/>
            <person name="Rabbinowitsch E."/>
            <person name="Rawlins N."/>
            <person name="Rajandream M.A."/>
            <person name="Reichard U."/>
            <person name="Renauld H."/>
            <person name="Robson G.D."/>
            <person name="Rodriguez de Cordoba S."/>
            <person name="Rodriguez-Pena J.M."/>
            <person name="Ronning C.M."/>
            <person name="Rutter S."/>
            <person name="Salzberg S.L."/>
            <person name="Sanchez M."/>
            <person name="Sanchez-Ferrero J.C."/>
            <person name="Saunders D."/>
            <person name="Seeger K."/>
            <person name="Squares R."/>
            <person name="Squares S."/>
            <person name="Takeuchi M."/>
            <person name="Tekaia F."/>
            <person name="Turner G."/>
            <person name="Vazquez de Aldana C.R."/>
            <person name="Weidman J."/>
            <person name="White O."/>
            <person name="Woodward J.R."/>
            <person name="Yu J.-H."/>
            <person name="Fraser C.M."/>
            <person name="Galagan J.E."/>
            <person name="Asai K."/>
            <person name="Machida M."/>
            <person name="Hall N."/>
            <person name="Barrell B.G."/>
            <person name="Denning D.W."/>
        </authorList>
    </citation>
    <scope>NUCLEOTIDE SEQUENCE [LARGE SCALE GENOMIC DNA]</scope>
    <source>
        <strain>ATCC MYA-4609 / CBS 101355 / FGSC A1100 / Af293</strain>
    </source>
</reference>